<accession>B0Z531</accession>
<proteinExistence type="inferred from homology"/>
<organism>
    <name type="scientific">Oenothera glazioviana</name>
    <name type="common">Large-flowered evening primrose</name>
    <name type="synonym">Oenothera erythrosepala</name>
    <dbReference type="NCBI Taxonomy" id="482428"/>
    <lineage>
        <taxon>Eukaryota</taxon>
        <taxon>Viridiplantae</taxon>
        <taxon>Streptophyta</taxon>
        <taxon>Embryophyta</taxon>
        <taxon>Tracheophyta</taxon>
        <taxon>Spermatophyta</taxon>
        <taxon>Magnoliopsida</taxon>
        <taxon>eudicotyledons</taxon>
        <taxon>Gunneridae</taxon>
        <taxon>Pentapetalae</taxon>
        <taxon>rosids</taxon>
        <taxon>malvids</taxon>
        <taxon>Myrtales</taxon>
        <taxon>Onagraceae</taxon>
        <taxon>Onagroideae</taxon>
        <taxon>Onagreae</taxon>
        <taxon>Oenothera</taxon>
    </lineage>
</organism>
<comment type="function">
    <text evidence="1">NDH shuttles electrons from NAD(P)H:plastoquinone, via FMN and iron-sulfur (Fe-S) centers, to quinones in the photosynthetic chain and possibly in a chloroplast respiratory chain. The immediate electron acceptor for the enzyme in this species is believed to be plastoquinone. Couples the redox reaction to proton translocation, and thus conserves the redox energy in a proton gradient.</text>
</comment>
<comment type="catalytic activity">
    <reaction evidence="1">
        <text>a plastoquinone + NADH + (n+1) H(+)(in) = a plastoquinol + NAD(+) + n H(+)(out)</text>
        <dbReference type="Rhea" id="RHEA:42608"/>
        <dbReference type="Rhea" id="RHEA-COMP:9561"/>
        <dbReference type="Rhea" id="RHEA-COMP:9562"/>
        <dbReference type="ChEBI" id="CHEBI:15378"/>
        <dbReference type="ChEBI" id="CHEBI:17757"/>
        <dbReference type="ChEBI" id="CHEBI:57540"/>
        <dbReference type="ChEBI" id="CHEBI:57945"/>
        <dbReference type="ChEBI" id="CHEBI:62192"/>
    </reaction>
</comment>
<comment type="catalytic activity">
    <reaction evidence="1">
        <text>a plastoquinone + NADPH + (n+1) H(+)(in) = a plastoquinol + NADP(+) + n H(+)(out)</text>
        <dbReference type="Rhea" id="RHEA:42612"/>
        <dbReference type="Rhea" id="RHEA-COMP:9561"/>
        <dbReference type="Rhea" id="RHEA-COMP:9562"/>
        <dbReference type="ChEBI" id="CHEBI:15378"/>
        <dbReference type="ChEBI" id="CHEBI:17757"/>
        <dbReference type="ChEBI" id="CHEBI:57783"/>
        <dbReference type="ChEBI" id="CHEBI:58349"/>
        <dbReference type="ChEBI" id="CHEBI:62192"/>
    </reaction>
</comment>
<comment type="cofactor">
    <cofactor evidence="1">
        <name>[4Fe-4S] cluster</name>
        <dbReference type="ChEBI" id="CHEBI:49883"/>
    </cofactor>
    <text evidence="1">Binds 1 [4Fe-4S] cluster.</text>
</comment>
<comment type="subunit">
    <text evidence="1">NDH is composed of at least 16 different subunits, 5 of which are encoded in the nucleus.</text>
</comment>
<comment type="subcellular location">
    <subcellularLocation>
        <location evidence="1">Plastid</location>
        <location evidence="1">Chloroplast thylakoid membrane</location>
        <topology evidence="1">Peripheral membrane protein</topology>
        <orientation evidence="1">Stromal side</orientation>
    </subcellularLocation>
</comment>
<comment type="similarity">
    <text evidence="1">Belongs to the complex I 20 kDa subunit family.</text>
</comment>
<feature type="chain" id="PRO_0000358569" description="NAD(P)H-quinone oxidoreductase subunit K, chloroplastic">
    <location>
        <begin position="1"/>
        <end position="225"/>
    </location>
</feature>
<feature type="binding site" evidence="1">
    <location>
        <position position="43"/>
    </location>
    <ligand>
        <name>[4Fe-4S] cluster</name>
        <dbReference type="ChEBI" id="CHEBI:49883"/>
    </ligand>
</feature>
<feature type="binding site" evidence="1">
    <location>
        <position position="44"/>
    </location>
    <ligand>
        <name>[4Fe-4S] cluster</name>
        <dbReference type="ChEBI" id="CHEBI:49883"/>
    </ligand>
</feature>
<feature type="binding site" evidence="1">
    <location>
        <position position="108"/>
    </location>
    <ligand>
        <name>[4Fe-4S] cluster</name>
        <dbReference type="ChEBI" id="CHEBI:49883"/>
    </ligand>
</feature>
<feature type="binding site" evidence="1">
    <location>
        <position position="139"/>
    </location>
    <ligand>
        <name>[4Fe-4S] cluster</name>
        <dbReference type="ChEBI" id="CHEBI:49883"/>
    </ligand>
</feature>
<dbReference type="EC" id="7.1.1.-" evidence="1"/>
<dbReference type="EMBL" id="EU262890">
    <property type="protein sequence ID" value="ABX10024.1"/>
    <property type="molecule type" value="Genomic_DNA"/>
</dbReference>
<dbReference type="RefSeq" id="YP_001687270.1">
    <property type="nucleotide sequence ID" value="NC_010360.2"/>
</dbReference>
<dbReference type="SMR" id="B0Z531"/>
<dbReference type="GeneID" id="5955306"/>
<dbReference type="GO" id="GO:0009535">
    <property type="term" value="C:chloroplast thylakoid membrane"/>
    <property type="evidence" value="ECO:0007669"/>
    <property type="project" value="UniProtKB-SubCell"/>
</dbReference>
<dbReference type="GO" id="GO:0045271">
    <property type="term" value="C:respiratory chain complex I"/>
    <property type="evidence" value="ECO:0007669"/>
    <property type="project" value="TreeGrafter"/>
</dbReference>
<dbReference type="GO" id="GO:0051539">
    <property type="term" value="F:4 iron, 4 sulfur cluster binding"/>
    <property type="evidence" value="ECO:0007669"/>
    <property type="project" value="UniProtKB-KW"/>
</dbReference>
<dbReference type="GO" id="GO:0005506">
    <property type="term" value="F:iron ion binding"/>
    <property type="evidence" value="ECO:0007669"/>
    <property type="project" value="UniProtKB-UniRule"/>
</dbReference>
<dbReference type="GO" id="GO:0008137">
    <property type="term" value="F:NADH dehydrogenase (ubiquinone) activity"/>
    <property type="evidence" value="ECO:0007669"/>
    <property type="project" value="InterPro"/>
</dbReference>
<dbReference type="GO" id="GO:0048038">
    <property type="term" value="F:quinone binding"/>
    <property type="evidence" value="ECO:0007669"/>
    <property type="project" value="UniProtKB-KW"/>
</dbReference>
<dbReference type="GO" id="GO:0009060">
    <property type="term" value="P:aerobic respiration"/>
    <property type="evidence" value="ECO:0007669"/>
    <property type="project" value="TreeGrafter"/>
</dbReference>
<dbReference type="GO" id="GO:0015990">
    <property type="term" value="P:electron transport coupled proton transport"/>
    <property type="evidence" value="ECO:0007669"/>
    <property type="project" value="TreeGrafter"/>
</dbReference>
<dbReference type="GO" id="GO:0019684">
    <property type="term" value="P:photosynthesis, light reaction"/>
    <property type="evidence" value="ECO:0007669"/>
    <property type="project" value="UniProtKB-UniRule"/>
</dbReference>
<dbReference type="FunFam" id="3.40.50.12280:FF:000003">
    <property type="entry name" value="NAD(P)H-quinone oxidoreductase subunit K, chloroplastic"/>
    <property type="match status" value="1"/>
</dbReference>
<dbReference type="Gene3D" id="3.40.50.12280">
    <property type="match status" value="1"/>
</dbReference>
<dbReference type="HAMAP" id="MF_01356">
    <property type="entry name" value="NDH1_NuoB"/>
    <property type="match status" value="1"/>
</dbReference>
<dbReference type="InterPro" id="IPR006137">
    <property type="entry name" value="NADH_UbQ_OxRdtase-like_20kDa"/>
</dbReference>
<dbReference type="InterPro" id="IPR006138">
    <property type="entry name" value="NADH_UQ_OxRdtase_20Kd_su"/>
</dbReference>
<dbReference type="NCBIfam" id="TIGR01957">
    <property type="entry name" value="nuoB_fam"/>
    <property type="match status" value="1"/>
</dbReference>
<dbReference type="NCBIfam" id="NF005012">
    <property type="entry name" value="PRK06411.1"/>
    <property type="match status" value="1"/>
</dbReference>
<dbReference type="PANTHER" id="PTHR11995">
    <property type="entry name" value="NADH DEHYDROGENASE"/>
    <property type="match status" value="1"/>
</dbReference>
<dbReference type="PANTHER" id="PTHR11995:SF14">
    <property type="entry name" value="NADH DEHYDROGENASE [UBIQUINONE] IRON-SULFUR PROTEIN 7, MITOCHONDRIAL"/>
    <property type="match status" value="1"/>
</dbReference>
<dbReference type="Pfam" id="PF01058">
    <property type="entry name" value="Oxidored_q6"/>
    <property type="match status" value="1"/>
</dbReference>
<dbReference type="SUPFAM" id="SSF56770">
    <property type="entry name" value="HydA/Nqo6-like"/>
    <property type="match status" value="1"/>
</dbReference>
<dbReference type="PROSITE" id="PS01150">
    <property type="entry name" value="COMPLEX1_20K"/>
    <property type="match status" value="1"/>
</dbReference>
<keyword id="KW-0004">4Fe-4S</keyword>
<keyword id="KW-0150">Chloroplast</keyword>
<keyword id="KW-0408">Iron</keyword>
<keyword id="KW-0411">Iron-sulfur</keyword>
<keyword id="KW-0472">Membrane</keyword>
<keyword id="KW-0479">Metal-binding</keyword>
<keyword id="KW-0520">NAD</keyword>
<keyword id="KW-0521">NADP</keyword>
<keyword id="KW-0934">Plastid</keyword>
<keyword id="KW-0618">Plastoquinone</keyword>
<keyword id="KW-0874">Quinone</keyword>
<keyword id="KW-0793">Thylakoid</keyword>
<keyword id="KW-1278">Translocase</keyword>
<keyword id="KW-0813">Transport</keyword>
<geneLocation type="chloroplast"/>
<evidence type="ECO:0000255" key="1">
    <source>
        <dbReference type="HAMAP-Rule" id="MF_01356"/>
    </source>
</evidence>
<gene>
    <name evidence="1" type="primary">ndhK</name>
</gene>
<reference key="1">
    <citation type="journal article" date="2008" name="Nucleic Acids Res.">
        <title>The complete nucleotide sequences of the five genetically distinct plastid genomes of Oenothera, subsection Oenothera: I. Sequence evaluation and plastome evolution.</title>
        <authorList>
            <person name="Greiner S."/>
            <person name="Wang X."/>
            <person name="Rauwolf U."/>
            <person name="Silber M.V."/>
            <person name="Mayer K."/>
            <person name="Meurer J."/>
            <person name="Haberer G."/>
            <person name="Herrmann R.G."/>
        </authorList>
    </citation>
    <scope>NUCLEOTIDE SEQUENCE [LARGE SCALE GENOMIC DNA]</scope>
    <source>
        <strain>cv. Rr-lamarckiana Sweden</strain>
    </source>
</reference>
<name>NDHK_OENGL</name>
<sequence length="225" mass="25259">MNSIEFTLLARRTQNSVISTTSNDLSNWSRLSSLWPLLYGTSCCFIEFASLIGSRFDFDRYGLVPRSSPRQADLILTAGTVTMKMAPSLVRLYEQMPEPKYVIAMGACTITGGMFSTDSYSTVRGVDKLIPVDVYLPGCPPKPEAIIDAITKLRKKISREIYEDRIRSQEENRCFTTNHKFHVGPSMHTGNYDPGLLYQLPSTSEIASETFFKYKSSVSAHELVN</sequence>
<protein>
    <recommendedName>
        <fullName evidence="1">NAD(P)H-quinone oxidoreductase subunit K, chloroplastic</fullName>
        <ecNumber evidence="1">7.1.1.-</ecNumber>
    </recommendedName>
    <alternativeName>
        <fullName evidence="1">NAD(P)H dehydrogenase subunit K</fullName>
    </alternativeName>
    <alternativeName>
        <fullName evidence="1">NADH-plastoquinone oxidoreductase subunit K</fullName>
    </alternativeName>
</protein>